<sequence>MWLQQRLKGLPGLLSSSWARRLLCLLGLLVLLLWFASSGARRAAGGLHLPSWARSEPGAAEPSACLEAATRAWRGLRDRGEAVPLGPGVPALVANGFLALDASNNRLWVTPGEREPAVTPDFVPFVQLRPLNVVAEAGEAVLLLREGLLRRVRCLQLGTPGSGPAAGVPGPASASGLSAGSGRDCVLLQEDFLAHRGRPHVYLQRIQLNNPTERVAALQTVGPTAGPVPKSFTSTLEKVGDHQFLLYSGRSTPLPSGLVHLVVVTSKKLVNRLQVAPKTQLDETVLWVVHISGPIHPQVLKSKGAKELKALQDLARKEMLELLEMPASELLQDHQYLWAQLFSPGVEMKRITDAHTPSGLTVNLTLYYMLSCSPAPLLSPSLSHREREQMEATLNYEDHCFSGHATMHAENLWPGQLSSVQQILQLADLWKLTLQKRGCKGLVKVGAPGILQGMVLSFGGLQFTENHLQFQADPEVLHNSYALHGIRYKNDHINLAVLVDAEGKPYLHVSLESRGQPVKIYACEAGCLHDPVELTSEPGGHTFSVMVTQPITPLLYISTDLTHLQDLRHTLHLKAILAHDEHMAQQDPGLPFLFWFSVASLITLFHLFLFKLIYNEYCGPGAKPLFRSKEDPSV</sequence>
<accession>Q91X21</accession>
<accession>B2KFU4</accession>
<accession>Q3U5A6</accession>
<accession>Q69Z34</accession>
<accession>Q9CY11</accession>
<reference key="1">
    <citation type="journal article" date="2004" name="DNA Res.">
        <title>Prediction of the coding sequences of mouse homologues of KIAA gene: IV. The complete nucleotide sequences of 500 mouse KIAA-homologous cDNAs identified by screening of terminal sequences of cDNA clones randomly sampled from size-fractionated libraries.</title>
        <authorList>
            <person name="Okazaki N."/>
            <person name="Kikuno R."/>
            <person name="Ohara R."/>
            <person name="Inamoto S."/>
            <person name="Koseki H."/>
            <person name="Hiraoka S."/>
            <person name="Saga Y."/>
            <person name="Seino S."/>
            <person name="Nishimura M."/>
            <person name="Kaisho T."/>
            <person name="Hoshino K."/>
            <person name="Kitamura H."/>
            <person name="Nagase T."/>
            <person name="Ohara O."/>
            <person name="Koga H."/>
        </authorList>
    </citation>
    <scope>NUCLEOTIDE SEQUENCE [LARGE SCALE MRNA] (ISOFORM 3)</scope>
    <source>
        <tissue>Fetal brain</tissue>
    </source>
</reference>
<reference key="2">
    <citation type="journal article" date="2005" name="Science">
        <title>The transcriptional landscape of the mammalian genome.</title>
        <authorList>
            <person name="Carninci P."/>
            <person name="Kasukawa T."/>
            <person name="Katayama S."/>
            <person name="Gough J."/>
            <person name="Frith M.C."/>
            <person name="Maeda N."/>
            <person name="Oyama R."/>
            <person name="Ravasi T."/>
            <person name="Lenhard B."/>
            <person name="Wells C."/>
            <person name="Kodzius R."/>
            <person name="Shimokawa K."/>
            <person name="Bajic V.B."/>
            <person name="Brenner S.E."/>
            <person name="Batalov S."/>
            <person name="Forrest A.R."/>
            <person name="Zavolan M."/>
            <person name="Davis M.J."/>
            <person name="Wilming L.G."/>
            <person name="Aidinis V."/>
            <person name="Allen J.E."/>
            <person name="Ambesi-Impiombato A."/>
            <person name="Apweiler R."/>
            <person name="Aturaliya R.N."/>
            <person name="Bailey T.L."/>
            <person name="Bansal M."/>
            <person name="Baxter L."/>
            <person name="Beisel K.W."/>
            <person name="Bersano T."/>
            <person name="Bono H."/>
            <person name="Chalk A.M."/>
            <person name="Chiu K.P."/>
            <person name="Choudhary V."/>
            <person name="Christoffels A."/>
            <person name="Clutterbuck D.R."/>
            <person name="Crowe M.L."/>
            <person name="Dalla E."/>
            <person name="Dalrymple B.P."/>
            <person name="de Bono B."/>
            <person name="Della Gatta G."/>
            <person name="di Bernardo D."/>
            <person name="Down T."/>
            <person name="Engstrom P."/>
            <person name="Fagiolini M."/>
            <person name="Faulkner G."/>
            <person name="Fletcher C.F."/>
            <person name="Fukushima T."/>
            <person name="Furuno M."/>
            <person name="Futaki S."/>
            <person name="Gariboldi M."/>
            <person name="Georgii-Hemming P."/>
            <person name="Gingeras T.R."/>
            <person name="Gojobori T."/>
            <person name="Green R.E."/>
            <person name="Gustincich S."/>
            <person name="Harbers M."/>
            <person name="Hayashi Y."/>
            <person name="Hensch T.K."/>
            <person name="Hirokawa N."/>
            <person name="Hill D."/>
            <person name="Huminiecki L."/>
            <person name="Iacono M."/>
            <person name="Ikeo K."/>
            <person name="Iwama A."/>
            <person name="Ishikawa T."/>
            <person name="Jakt M."/>
            <person name="Kanapin A."/>
            <person name="Katoh M."/>
            <person name="Kawasawa Y."/>
            <person name="Kelso J."/>
            <person name="Kitamura H."/>
            <person name="Kitano H."/>
            <person name="Kollias G."/>
            <person name="Krishnan S.P."/>
            <person name="Kruger A."/>
            <person name="Kummerfeld S.K."/>
            <person name="Kurochkin I.V."/>
            <person name="Lareau L.F."/>
            <person name="Lazarevic D."/>
            <person name="Lipovich L."/>
            <person name="Liu J."/>
            <person name="Liuni S."/>
            <person name="McWilliam S."/>
            <person name="Madan Babu M."/>
            <person name="Madera M."/>
            <person name="Marchionni L."/>
            <person name="Matsuda H."/>
            <person name="Matsuzawa S."/>
            <person name="Miki H."/>
            <person name="Mignone F."/>
            <person name="Miyake S."/>
            <person name="Morris K."/>
            <person name="Mottagui-Tabar S."/>
            <person name="Mulder N."/>
            <person name="Nakano N."/>
            <person name="Nakauchi H."/>
            <person name="Ng P."/>
            <person name="Nilsson R."/>
            <person name="Nishiguchi S."/>
            <person name="Nishikawa S."/>
            <person name="Nori F."/>
            <person name="Ohara O."/>
            <person name="Okazaki Y."/>
            <person name="Orlando V."/>
            <person name="Pang K.C."/>
            <person name="Pavan W.J."/>
            <person name="Pavesi G."/>
            <person name="Pesole G."/>
            <person name="Petrovsky N."/>
            <person name="Piazza S."/>
            <person name="Reed J."/>
            <person name="Reid J.F."/>
            <person name="Ring B.Z."/>
            <person name="Ringwald M."/>
            <person name="Rost B."/>
            <person name="Ruan Y."/>
            <person name="Salzberg S.L."/>
            <person name="Sandelin A."/>
            <person name="Schneider C."/>
            <person name="Schoenbach C."/>
            <person name="Sekiguchi K."/>
            <person name="Semple C.A."/>
            <person name="Seno S."/>
            <person name="Sessa L."/>
            <person name="Sheng Y."/>
            <person name="Shibata Y."/>
            <person name="Shimada H."/>
            <person name="Shimada K."/>
            <person name="Silva D."/>
            <person name="Sinclair B."/>
            <person name="Sperling S."/>
            <person name="Stupka E."/>
            <person name="Sugiura K."/>
            <person name="Sultana R."/>
            <person name="Takenaka Y."/>
            <person name="Taki K."/>
            <person name="Tammoja K."/>
            <person name="Tan S.L."/>
            <person name="Tang S."/>
            <person name="Taylor M.S."/>
            <person name="Tegner J."/>
            <person name="Teichmann S.A."/>
            <person name="Ueda H.R."/>
            <person name="van Nimwegen E."/>
            <person name="Verardo R."/>
            <person name="Wei C.L."/>
            <person name="Yagi K."/>
            <person name="Yamanishi H."/>
            <person name="Zabarovsky E."/>
            <person name="Zhu S."/>
            <person name="Zimmer A."/>
            <person name="Hide W."/>
            <person name="Bult C."/>
            <person name="Grimmond S.M."/>
            <person name="Teasdale R.D."/>
            <person name="Liu E.T."/>
            <person name="Brusic V."/>
            <person name="Quackenbush J."/>
            <person name="Wahlestedt C."/>
            <person name="Mattick J.S."/>
            <person name="Hume D.A."/>
            <person name="Kai C."/>
            <person name="Sasaki D."/>
            <person name="Tomaru Y."/>
            <person name="Fukuda S."/>
            <person name="Kanamori-Katayama M."/>
            <person name="Suzuki M."/>
            <person name="Aoki J."/>
            <person name="Arakawa T."/>
            <person name="Iida J."/>
            <person name="Imamura K."/>
            <person name="Itoh M."/>
            <person name="Kato T."/>
            <person name="Kawaji H."/>
            <person name="Kawagashira N."/>
            <person name="Kawashima T."/>
            <person name="Kojima M."/>
            <person name="Kondo S."/>
            <person name="Konno H."/>
            <person name="Nakano K."/>
            <person name="Ninomiya N."/>
            <person name="Nishio T."/>
            <person name="Okada M."/>
            <person name="Plessy C."/>
            <person name="Shibata K."/>
            <person name="Shiraki T."/>
            <person name="Suzuki S."/>
            <person name="Tagami M."/>
            <person name="Waki K."/>
            <person name="Watahiki A."/>
            <person name="Okamura-Oho Y."/>
            <person name="Suzuki H."/>
            <person name="Kawai J."/>
            <person name="Hayashizaki Y."/>
        </authorList>
    </citation>
    <scope>NUCLEOTIDE SEQUENCE [LARGE SCALE MRNA] (ISOFORMS 1 AND 2)</scope>
    <source>
        <strain>C57BL/6J</strain>
        <tissue>Liver</tissue>
        <tissue>Thymus</tissue>
    </source>
</reference>
<reference key="3">
    <citation type="journal article" date="2009" name="PLoS Biol.">
        <title>Lineage-specific biology revealed by a finished genome assembly of the mouse.</title>
        <authorList>
            <person name="Church D.M."/>
            <person name="Goodstadt L."/>
            <person name="Hillier L.W."/>
            <person name="Zody M.C."/>
            <person name="Goldstein S."/>
            <person name="She X."/>
            <person name="Bult C.J."/>
            <person name="Agarwala R."/>
            <person name="Cherry J.L."/>
            <person name="DiCuccio M."/>
            <person name="Hlavina W."/>
            <person name="Kapustin Y."/>
            <person name="Meric P."/>
            <person name="Maglott D."/>
            <person name="Birtle Z."/>
            <person name="Marques A.C."/>
            <person name="Graves T."/>
            <person name="Zhou S."/>
            <person name="Teague B."/>
            <person name="Potamousis K."/>
            <person name="Churas C."/>
            <person name="Place M."/>
            <person name="Herschleb J."/>
            <person name="Runnheim R."/>
            <person name="Forrest D."/>
            <person name="Amos-Landgraf J."/>
            <person name="Schwartz D.C."/>
            <person name="Cheng Z."/>
            <person name="Lindblad-Toh K."/>
            <person name="Eichler E.E."/>
            <person name="Ponting C.P."/>
        </authorList>
    </citation>
    <scope>NUCLEOTIDE SEQUENCE [LARGE SCALE GENOMIC DNA]</scope>
    <source>
        <strain>C57BL/6J</strain>
    </source>
</reference>
<reference key="4">
    <citation type="journal article" date="2004" name="Genome Res.">
        <title>The status, quality, and expansion of the NIH full-length cDNA project: the Mammalian Gene Collection (MGC).</title>
        <authorList>
            <consortium name="The MGC Project Team"/>
        </authorList>
    </citation>
    <scope>NUCLEOTIDE SEQUENCE [LARGE SCALE MRNA] (ISOFORM 1)</scope>
    <source>
        <strain>FVB/N</strain>
        <tissue>Salivary gland</tissue>
    </source>
</reference>
<reference key="5">
    <citation type="journal article" date="2010" name="Cell">
        <title>A tissue-specific atlas of mouse protein phosphorylation and expression.</title>
        <authorList>
            <person name="Huttlin E.L."/>
            <person name="Jedrychowski M.P."/>
            <person name="Elias J.E."/>
            <person name="Goswami T."/>
            <person name="Rad R."/>
            <person name="Beausoleil S.A."/>
            <person name="Villen J."/>
            <person name="Haas W."/>
            <person name="Sowa M.E."/>
            <person name="Gygi S.P."/>
        </authorList>
    </citation>
    <scope>IDENTIFICATION BY MASS SPECTROMETRY [LARGE SCALE ANALYSIS]</scope>
    <source>
        <tissue>Testis</tissue>
    </source>
</reference>
<organism>
    <name type="scientific">Mus musculus</name>
    <name type="common">Mouse</name>
    <dbReference type="NCBI Taxonomy" id="10090"/>
    <lineage>
        <taxon>Eukaryota</taxon>
        <taxon>Metazoa</taxon>
        <taxon>Chordata</taxon>
        <taxon>Craniata</taxon>
        <taxon>Vertebrata</taxon>
        <taxon>Euteleostomi</taxon>
        <taxon>Mammalia</taxon>
        <taxon>Eutheria</taxon>
        <taxon>Euarchontoglires</taxon>
        <taxon>Glires</taxon>
        <taxon>Rodentia</taxon>
        <taxon>Myomorpha</taxon>
        <taxon>Muroidea</taxon>
        <taxon>Muridae</taxon>
        <taxon>Murinae</taxon>
        <taxon>Mus</taxon>
        <taxon>Mus</taxon>
    </lineage>
</organism>
<evidence type="ECO:0000255" key="1"/>
<evidence type="ECO:0000303" key="2">
    <source>
    </source>
</evidence>
<evidence type="ECO:0000303" key="3">
    <source>
    </source>
</evidence>
<evidence type="ECO:0000305" key="4"/>
<gene>
    <name type="primary">Kiaa2013</name>
</gene>
<comment type="subcellular location">
    <subcellularLocation>
        <location evidence="4">Membrane</location>
        <topology evidence="4">Single-pass type I membrane protein</topology>
    </subcellularLocation>
</comment>
<comment type="alternative products">
    <event type="alternative splicing"/>
    <isoform>
        <id>Q91X21-1</id>
        <name>1</name>
        <sequence type="displayed"/>
    </isoform>
    <isoform>
        <id>Q91X21-2</id>
        <name>2</name>
        <sequence type="described" ref="VSP_026489"/>
    </isoform>
    <isoform>
        <id>Q91X21-3</id>
        <name>3</name>
        <sequence type="described" ref="VSP_026488 VSP_026489"/>
    </isoform>
</comment>
<comment type="sequence caution" evidence="4">
    <conflict type="erroneous initiation">
        <sequence resource="EMBL-CDS" id="BAD32610"/>
    </conflict>
</comment>
<protein>
    <recommendedName>
        <fullName>Uncharacterized protein KIAA2013</fullName>
    </recommendedName>
</protein>
<name>K2013_MOUSE</name>
<feature type="signal peptide" evidence="1">
    <location>
        <begin position="1"/>
        <end position="40"/>
    </location>
</feature>
<feature type="chain" id="PRO_0000293469" description="Uncharacterized protein KIAA2013">
    <location>
        <begin position="41"/>
        <end position="634"/>
    </location>
</feature>
<feature type="topological domain" description="Extracellular" evidence="1">
    <location>
        <begin position="41"/>
        <end position="589"/>
    </location>
</feature>
<feature type="transmembrane region" description="Helical" evidence="1">
    <location>
        <begin position="590"/>
        <end position="610"/>
    </location>
</feature>
<feature type="topological domain" description="Cytoplasmic" evidence="1">
    <location>
        <begin position="611"/>
        <end position="634"/>
    </location>
</feature>
<feature type="glycosylation site" description="N-linked (GlcNAc...) asparagine" evidence="1">
    <location>
        <position position="363"/>
    </location>
</feature>
<feature type="splice variant" id="VSP_026488" description="In isoform 3." evidence="2">
    <location>
        <begin position="1"/>
        <end position="318"/>
    </location>
</feature>
<feature type="splice variant" id="VSP_026489" description="In isoform 2 and isoform 3." evidence="2 3">
    <original>EDPSV</original>
    <variation>VGYLDS</variation>
    <location>
        <begin position="630"/>
        <end position="634"/>
    </location>
</feature>
<feature type="sequence conflict" description="In Ref. 1; BAD32610." evidence="4" ref="1">
    <original>MWLQQRLKGLPGLLSSSWARRLLCL</original>
    <variation>GGRGDAARGV</variation>
    <location>
        <begin position="1"/>
        <end position="25"/>
    </location>
</feature>
<feature type="sequence conflict" description="In Ref. 2; BAE32173." evidence="4" ref="2">
    <original>V</original>
    <variation>E</variation>
    <location>
        <position position="109"/>
    </location>
</feature>
<feature type="sequence conflict" description="In Ref. 2; BAE32173." evidence="4" ref="2">
    <original>L</original>
    <variation>F</variation>
    <location>
        <position position="378"/>
    </location>
</feature>
<feature type="sequence conflict" description="In Ref. 2; BAB27367." evidence="4" ref="2">
    <original>S</original>
    <variation>T</variation>
    <location>
        <position position="480"/>
    </location>
</feature>
<proteinExistence type="evidence at protein level"/>
<dbReference type="EMBL" id="AK173332">
    <property type="protein sequence ID" value="BAD32610.1"/>
    <property type="status" value="ALT_INIT"/>
    <property type="molecule type" value="mRNA"/>
</dbReference>
<dbReference type="EMBL" id="AK011059">
    <property type="protein sequence ID" value="BAB27367.1"/>
    <property type="molecule type" value="mRNA"/>
</dbReference>
<dbReference type="EMBL" id="AK153761">
    <property type="protein sequence ID" value="BAE32173.1"/>
    <property type="molecule type" value="mRNA"/>
</dbReference>
<dbReference type="EMBL" id="AL607066">
    <property type="status" value="NOT_ANNOTATED_CDS"/>
    <property type="molecule type" value="Genomic_DNA"/>
</dbReference>
<dbReference type="EMBL" id="CU207406">
    <property type="status" value="NOT_ANNOTATED_CDS"/>
    <property type="molecule type" value="Genomic_DNA"/>
</dbReference>
<dbReference type="EMBL" id="BC012878">
    <property type="protein sequence ID" value="AAH12878.1"/>
    <property type="molecule type" value="mRNA"/>
</dbReference>
<dbReference type="CCDS" id="CCDS18925.1">
    <molecule id="Q91X21-1"/>
</dbReference>
<dbReference type="RefSeq" id="NP_084117.2">
    <molecule id="Q91X21-1"/>
    <property type="nucleotide sequence ID" value="NM_029841.3"/>
</dbReference>
<dbReference type="FunCoup" id="Q91X21">
    <property type="interactions" value="2386"/>
</dbReference>
<dbReference type="STRING" id="10090.ENSMUSP00000099522"/>
<dbReference type="GlyCosmos" id="Q91X21">
    <property type="glycosylation" value="1 site, No reported glycans"/>
</dbReference>
<dbReference type="GlyGen" id="Q91X21">
    <property type="glycosylation" value="3 sites"/>
</dbReference>
<dbReference type="PhosphoSitePlus" id="Q91X21"/>
<dbReference type="SwissPalm" id="Q91X21"/>
<dbReference type="PaxDb" id="10090-ENSMUSP00000099522"/>
<dbReference type="PeptideAtlas" id="Q91X21"/>
<dbReference type="ProteomicsDB" id="269142">
    <molecule id="Q91X21-1"/>
</dbReference>
<dbReference type="ProteomicsDB" id="269143">
    <molecule id="Q91X21-2"/>
</dbReference>
<dbReference type="Pumba" id="Q91X21"/>
<dbReference type="Antibodypedia" id="65397">
    <property type="antibodies" value="32 antibodies from 9 providers"/>
</dbReference>
<dbReference type="Ensembl" id="ENSMUST00000103232.2">
    <molecule id="Q91X21-1"/>
    <property type="protein sequence ID" value="ENSMUSP00000099522.2"/>
    <property type="gene ID" value="ENSMUSG00000044496.7"/>
</dbReference>
<dbReference type="GeneID" id="77034"/>
<dbReference type="KEGG" id="mmu:77034"/>
<dbReference type="UCSC" id="uc008vtm.1">
    <molecule id="Q91X21-1"/>
    <property type="organism name" value="mouse"/>
</dbReference>
<dbReference type="UCSC" id="uc008vtn.1">
    <molecule id="Q91X21-2"/>
    <property type="organism name" value="mouse"/>
</dbReference>
<dbReference type="AGR" id="MGI:1924284"/>
<dbReference type="MGI" id="MGI:1924284">
    <property type="gene designation" value="2510039O18Rik"/>
</dbReference>
<dbReference type="VEuPathDB" id="HostDB:ENSMUSG00000044496"/>
<dbReference type="eggNOG" id="KOG3778">
    <property type="taxonomic scope" value="Eukaryota"/>
</dbReference>
<dbReference type="GeneTree" id="ENSGT00390000007643"/>
<dbReference type="HOGENOM" id="CLU_023338_0_0_1"/>
<dbReference type="InParanoid" id="Q91X21"/>
<dbReference type="OMA" id="LAEIHRW"/>
<dbReference type="OrthoDB" id="10017443at2759"/>
<dbReference type="PhylomeDB" id="Q91X21"/>
<dbReference type="TreeFam" id="TF314999"/>
<dbReference type="BioGRID-ORCS" id="77034">
    <property type="hits" value="6 hits in 76 CRISPR screens"/>
</dbReference>
<dbReference type="ChiTaRS" id="2510039O18Rik">
    <property type="organism name" value="mouse"/>
</dbReference>
<dbReference type="PRO" id="PR:Q91X21"/>
<dbReference type="Proteomes" id="UP000000589">
    <property type="component" value="Chromosome 4"/>
</dbReference>
<dbReference type="RNAct" id="Q91X21">
    <property type="molecule type" value="protein"/>
</dbReference>
<dbReference type="Bgee" id="ENSMUSG00000044496">
    <property type="expression patterns" value="Expressed in paneth cell and 261 other cell types or tissues"/>
</dbReference>
<dbReference type="GO" id="GO:0016020">
    <property type="term" value="C:membrane"/>
    <property type="evidence" value="ECO:0007669"/>
    <property type="project" value="UniProtKB-SubCell"/>
</dbReference>
<dbReference type="InterPro" id="IPR018795">
    <property type="entry name" value="K2013-like"/>
</dbReference>
<dbReference type="PANTHER" id="PTHR31386:SF2">
    <property type="entry name" value="SIMILAR TO RIKEN CDNA 2510039O18"/>
    <property type="match status" value="1"/>
</dbReference>
<dbReference type="PANTHER" id="PTHR31386">
    <property type="entry name" value="UNCHARACTERIZED PROTEIN KIAA2013"/>
    <property type="match status" value="1"/>
</dbReference>
<dbReference type="Pfam" id="PF10222">
    <property type="entry name" value="DUF2152"/>
    <property type="match status" value="1"/>
</dbReference>
<keyword id="KW-0025">Alternative splicing</keyword>
<keyword id="KW-0325">Glycoprotein</keyword>
<keyword id="KW-0472">Membrane</keyword>
<keyword id="KW-1185">Reference proteome</keyword>
<keyword id="KW-0732">Signal</keyword>
<keyword id="KW-0812">Transmembrane</keyword>
<keyword id="KW-1133">Transmembrane helix</keyword>